<accession>A5UFD9</accession>
<name>METE_HAEIG</name>
<keyword id="KW-0028">Amino-acid biosynthesis</keyword>
<keyword id="KW-0479">Metal-binding</keyword>
<keyword id="KW-0486">Methionine biosynthesis</keyword>
<keyword id="KW-0489">Methyltransferase</keyword>
<keyword id="KW-0677">Repeat</keyword>
<keyword id="KW-0808">Transferase</keyword>
<keyword id="KW-0862">Zinc</keyword>
<proteinExistence type="inferred from homology"/>
<dbReference type="EC" id="2.1.1.14" evidence="1"/>
<dbReference type="EMBL" id="CP000672">
    <property type="protein sequence ID" value="ABQ99494.1"/>
    <property type="molecule type" value="Genomic_DNA"/>
</dbReference>
<dbReference type="SMR" id="A5UFD9"/>
<dbReference type="KEGG" id="hiq:CGSHiGG_02260"/>
<dbReference type="HOGENOM" id="CLU_013175_0_0_6"/>
<dbReference type="UniPathway" id="UPA00051">
    <property type="reaction ID" value="UER00082"/>
</dbReference>
<dbReference type="Proteomes" id="UP000001990">
    <property type="component" value="Chromosome"/>
</dbReference>
<dbReference type="GO" id="GO:0003871">
    <property type="term" value="F:5-methyltetrahydropteroyltriglutamate-homocysteine S-methyltransferase activity"/>
    <property type="evidence" value="ECO:0007669"/>
    <property type="project" value="UniProtKB-UniRule"/>
</dbReference>
<dbReference type="GO" id="GO:0008270">
    <property type="term" value="F:zinc ion binding"/>
    <property type="evidence" value="ECO:0007669"/>
    <property type="project" value="InterPro"/>
</dbReference>
<dbReference type="GO" id="GO:0009086">
    <property type="term" value="P:methionine biosynthetic process"/>
    <property type="evidence" value="ECO:0007669"/>
    <property type="project" value="UniProtKB-UniRule"/>
</dbReference>
<dbReference type="GO" id="GO:0032259">
    <property type="term" value="P:methylation"/>
    <property type="evidence" value="ECO:0007669"/>
    <property type="project" value="UniProtKB-KW"/>
</dbReference>
<dbReference type="CDD" id="cd03311">
    <property type="entry name" value="CIMS_C_terminal_like"/>
    <property type="match status" value="1"/>
</dbReference>
<dbReference type="CDD" id="cd03312">
    <property type="entry name" value="CIMS_N_terminal_like"/>
    <property type="match status" value="1"/>
</dbReference>
<dbReference type="FunFam" id="3.20.20.210:FF:000002">
    <property type="entry name" value="5-methyltetrahydropteroyltriglutamate--homocysteine methyltransferase"/>
    <property type="match status" value="1"/>
</dbReference>
<dbReference type="Gene3D" id="3.20.20.210">
    <property type="match status" value="2"/>
</dbReference>
<dbReference type="HAMAP" id="MF_00172">
    <property type="entry name" value="Meth_synth"/>
    <property type="match status" value="1"/>
</dbReference>
<dbReference type="InterPro" id="IPR013215">
    <property type="entry name" value="Cbl-indep_Met_Synth_N"/>
</dbReference>
<dbReference type="InterPro" id="IPR006276">
    <property type="entry name" value="Cobalamin-indep_Met_synthase"/>
</dbReference>
<dbReference type="InterPro" id="IPR002629">
    <property type="entry name" value="Met_Synth_C/arc"/>
</dbReference>
<dbReference type="InterPro" id="IPR038071">
    <property type="entry name" value="UROD/MetE-like_sf"/>
</dbReference>
<dbReference type="NCBIfam" id="TIGR01371">
    <property type="entry name" value="met_syn_B12ind"/>
    <property type="match status" value="1"/>
</dbReference>
<dbReference type="NCBIfam" id="NF003556">
    <property type="entry name" value="PRK05222.1"/>
    <property type="match status" value="1"/>
</dbReference>
<dbReference type="PANTHER" id="PTHR30519">
    <property type="entry name" value="5-METHYLTETRAHYDROPTEROYLTRIGLUTAMATE--HOMOCYSTEINE METHYLTRANSFERASE"/>
    <property type="match status" value="1"/>
</dbReference>
<dbReference type="Pfam" id="PF08267">
    <property type="entry name" value="Meth_synt_1"/>
    <property type="match status" value="1"/>
</dbReference>
<dbReference type="Pfam" id="PF01717">
    <property type="entry name" value="Meth_synt_2"/>
    <property type="match status" value="1"/>
</dbReference>
<dbReference type="PIRSF" id="PIRSF000382">
    <property type="entry name" value="MeTrfase_B12_ind"/>
    <property type="match status" value="1"/>
</dbReference>
<dbReference type="SUPFAM" id="SSF51726">
    <property type="entry name" value="UROD/MetE-like"/>
    <property type="match status" value="2"/>
</dbReference>
<feature type="chain" id="PRO_1000017246" description="5-methyltetrahydropteroyltriglutamate--homocysteine methyltransferase">
    <location>
        <begin position="1"/>
        <end position="756"/>
    </location>
</feature>
<feature type="active site" description="Proton donor" evidence="1">
    <location>
        <position position="695"/>
    </location>
</feature>
<feature type="binding site" evidence="1">
    <location>
        <begin position="16"/>
        <end position="19"/>
    </location>
    <ligand>
        <name>5-methyltetrahydropteroyltri-L-glutamate</name>
        <dbReference type="ChEBI" id="CHEBI:58207"/>
    </ligand>
</feature>
<feature type="binding site" evidence="1">
    <location>
        <position position="112"/>
    </location>
    <ligand>
        <name>5-methyltetrahydropteroyltri-L-glutamate</name>
        <dbReference type="ChEBI" id="CHEBI:58207"/>
    </ligand>
</feature>
<feature type="binding site" evidence="1">
    <location>
        <begin position="432"/>
        <end position="434"/>
    </location>
    <ligand>
        <name>L-homocysteine</name>
        <dbReference type="ChEBI" id="CHEBI:58199"/>
    </ligand>
</feature>
<feature type="binding site" evidence="1">
    <location>
        <begin position="432"/>
        <end position="434"/>
    </location>
    <ligand>
        <name>L-methionine</name>
        <dbReference type="ChEBI" id="CHEBI:57844"/>
    </ligand>
</feature>
<feature type="binding site" evidence="1">
    <location>
        <position position="485"/>
    </location>
    <ligand>
        <name>L-homocysteine</name>
        <dbReference type="ChEBI" id="CHEBI:58199"/>
    </ligand>
</feature>
<feature type="binding site" evidence="1">
    <location>
        <position position="485"/>
    </location>
    <ligand>
        <name>L-methionine</name>
        <dbReference type="ChEBI" id="CHEBI:57844"/>
    </ligand>
</feature>
<feature type="binding site" evidence="1">
    <location>
        <begin position="516"/>
        <end position="517"/>
    </location>
    <ligand>
        <name>5-methyltetrahydropteroyltri-L-glutamate</name>
        <dbReference type="ChEBI" id="CHEBI:58207"/>
    </ligand>
</feature>
<feature type="binding site" evidence="1">
    <location>
        <position position="562"/>
    </location>
    <ligand>
        <name>5-methyltetrahydropteroyltri-L-glutamate</name>
        <dbReference type="ChEBI" id="CHEBI:58207"/>
    </ligand>
</feature>
<feature type="binding site" evidence="1">
    <location>
        <position position="600"/>
    </location>
    <ligand>
        <name>L-homocysteine</name>
        <dbReference type="ChEBI" id="CHEBI:58199"/>
    </ligand>
</feature>
<feature type="binding site" evidence="1">
    <location>
        <position position="600"/>
    </location>
    <ligand>
        <name>L-methionine</name>
        <dbReference type="ChEBI" id="CHEBI:57844"/>
    </ligand>
</feature>
<feature type="binding site" evidence="1">
    <location>
        <position position="606"/>
    </location>
    <ligand>
        <name>5-methyltetrahydropteroyltri-L-glutamate</name>
        <dbReference type="ChEBI" id="CHEBI:58207"/>
    </ligand>
</feature>
<feature type="binding site" evidence="1">
    <location>
        <position position="642"/>
    </location>
    <ligand>
        <name>Zn(2+)</name>
        <dbReference type="ChEBI" id="CHEBI:29105"/>
        <note>catalytic</note>
    </ligand>
</feature>
<feature type="binding site" evidence="1">
    <location>
        <position position="644"/>
    </location>
    <ligand>
        <name>Zn(2+)</name>
        <dbReference type="ChEBI" id="CHEBI:29105"/>
        <note>catalytic</note>
    </ligand>
</feature>
<feature type="binding site" evidence="1">
    <location>
        <position position="666"/>
    </location>
    <ligand>
        <name>Zn(2+)</name>
        <dbReference type="ChEBI" id="CHEBI:29105"/>
        <note>catalytic</note>
    </ligand>
</feature>
<feature type="binding site" evidence="1">
    <location>
        <position position="727"/>
    </location>
    <ligand>
        <name>Zn(2+)</name>
        <dbReference type="ChEBI" id="CHEBI:29105"/>
        <note>catalytic</note>
    </ligand>
</feature>
<comment type="function">
    <text evidence="1">Catalyzes the transfer of a methyl group from 5-methyltetrahydrofolate to homocysteine resulting in methionine formation.</text>
</comment>
<comment type="catalytic activity">
    <reaction evidence="1">
        <text>5-methyltetrahydropteroyltri-L-glutamate + L-homocysteine = tetrahydropteroyltri-L-glutamate + L-methionine</text>
        <dbReference type="Rhea" id="RHEA:21196"/>
        <dbReference type="ChEBI" id="CHEBI:57844"/>
        <dbReference type="ChEBI" id="CHEBI:58140"/>
        <dbReference type="ChEBI" id="CHEBI:58199"/>
        <dbReference type="ChEBI" id="CHEBI:58207"/>
        <dbReference type="EC" id="2.1.1.14"/>
    </reaction>
</comment>
<comment type="cofactor">
    <cofactor evidence="1">
        <name>Zn(2+)</name>
        <dbReference type="ChEBI" id="CHEBI:29105"/>
    </cofactor>
    <text evidence="1">Binds 1 zinc ion per subunit.</text>
</comment>
<comment type="pathway">
    <text evidence="1">Amino-acid biosynthesis; L-methionine biosynthesis via de novo pathway; L-methionine from L-homocysteine (MetE route): step 1/1.</text>
</comment>
<comment type="similarity">
    <text evidence="1">Belongs to the vitamin-B12 independent methionine synthase family.</text>
</comment>
<gene>
    <name evidence="1" type="primary">metE</name>
    <name type="ordered locus">CGSHiGG_02260</name>
</gene>
<protein>
    <recommendedName>
        <fullName evidence="1">5-methyltetrahydropteroyltriglutamate--homocysteine methyltransferase</fullName>
        <ecNumber evidence="1">2.1.1.14</ecNumber>
    </recommendedName>
    <alternativeName>
        <fullName evidence="1">Cobalamin-independent methionine synthase</fullName>
    </alternativeName>
    <alternativeName>
        <fullName evidence="1">Methionine synthase, vitamin-B12 independent isozyme</fullName>
    </alternativeName>
</protein>
<sequence length="756" mass="85193">MTTSHILGFPRVGAKRELKFAQERYWRKELAEQDLLDLAKALREKNWKHQAAANADFVAVGDFTFYDHILDLQVATGAIPARFGFDSQNLTLDQYFQLARGNKDQFAIEMTKWFDTNYHYLVPEFQKSTAFKANPAHYVNQIREAKALGLNFKPVIVGPLTFLWLGKEKGEAFNRFDLLNQLVPVYVEILNALVAEGAEWIQIDEPALALDLPAEWVEAYKSVYAELSKVNAKLLLATYFGSVAEHAELLKALPVAGLHLDLVRAPEQLAAFEDYSKVLSAGVIEGRNIWRANLNKVLDVLEPLKAKLGERLWIAPSCSLLHTPFDLEVEVQLKEKNTALYSWLSFTLQKVEELNVLKQALNNGRASVQAALDASQAAADARATSKEIHRPEVAERLANLPKGADQRKSPFAERIVKQNAWLNLPLLPTTNIGSFPQTTEIRHARASFKKGELSLADYEAAMKKEIEYVVRRQEELDLDVLVHGEAERNDMVEYFGELLDGFAFTKFGWVQSYGSRCVKPPVIYGDVIRPEPMTVRWSQYAQSLTNRVMKGMLTGPVTILQWSFVRNDIPRSTVCKQIGVALSDEVLDLEAAGIKVIQIDEPAIREGLPLKRADWDAYLQWAGEAFRLSSMGVQDDTQIHTHMCYSEFNDILPAIAALDADVITIETSRSDMELLTAFADFKYPNDIGPGVYDIHSPRVPTATEVEHLLRKALNVIPKERLWVNPDCGLKTRGWTETIDQLKVMVDVTKKLRAELA</sequence>
<organism>
    <name type="scientific">Haemophilus influenzae (strain PittGG)</name>
    <dbReference type="NCBI Taxonomy" id="374931"/>
    <lineage>
        <taxon>Bacteria</taxon>
        <taxon>Pseudomonadati</taxon>
        <taxon>Pseudomonadota</taxon>
        <taxon>Gammaproteobacteria</taxon>
        <taxon>Pasteurellales</taxon>
        <taxon>Pasteurellaceae</taxon>
        <taxon>Haemophilus</taxon>
    </lineage>
</organism>
<reference key="1">
    <citation type="journal article" date="2007" name="Genome Biol.">
        <title>Characterization and modeling of the Haemophilus influenzae core and supragenomes based on the complete genomic sequences of Rd and 12 clinical nontypeable strains.</title>
        <authorList>
            <person name="Hogg J.S."/>
            <person name="Hu F.Z."/>
            <person name="Janto B."/>
            <person name="Boissy R."/>
            <person name="Hayes J."/>
            <person name="Keefe R."/>
            <person name="Post J.C."/>
            <person name="Ehrlich G.D."/>
        </authorList>
    </citation>
    <scope>NUCLEOTIDE SEQUENCE [LARGE SCALE GENOMIC DNA]</scope>
    <source>
        <strain>PittGG</strain>
    </source>
</reference>
<evidence type="ECO:0000255" key="1">
    <source>
        <dbReference type="HAMAP-Rule" id="MF_00172"/>
    </source>
</evidence>